<feature type="chain" id="PRO_1000072914" description="tRNA/tmRNA (uracil-C(5))-methyltransferase">
    <location>
        <begin position="1"/>
        <end position="365"/>
    </location>
</feature>
<feature type="active site" description="Nucleophile" evidence="1">
    <location>
        <position position="323"/>
    </location>
</feature>
<feature type="active site" description="Proton acceptor" evidence="1">
    <location>
        <position position="357"/>
    </location>
</feature>
<feature type="binding site" evidence="1">
    <location>
        <position position="189"/>
    </location>
    <ligand>
        <name>S-adenosyl-L-methionine</name>
        <dbReference type="ChEBI" id="CHEBI:59789"/>
    </ligand>
</feature>
<feature type="binding site" evidence="1">
    <location>
        <position position="217"/>
    </location>
    <ligand>
        <name>S-adenosyl-L-methionine</name>
        <dbReference type="ChEBI" id="CHEBI:59789"/>
    </ligand>
</feature>
<feature type="binding site" evidence="1">
    <location>
        <position position="222"/>
    </location>
    <ligand>
        <name>S-adenosyl-L-methionine</name>
        <dbReference type="ChEBI" id="CHEBI:59789"/>
    </ligand>
</feature>
<feature type="binding site" evidence="1">
    <location>
        <position position="238"/>
    </location>
    <ligand>
        <name>S-adenosyl-L-methionine</name>
        <dbReference type="ChEBI" id="CHEBI:59789"/>
    </ligand>
</feature>
<feature type="binding site" evidence="1">
    <location>
        <position position="298"/>
    </location>
    <ligand>
        <name>S-adenosyl-L-methionine</name>
        <dbReference type="ChEBI" id="CHEBI:59789"/>
    </ligand>
</feature>
<evidence type="ECO:0000255" key="1">
    <source>
        <dbReference type="HAMAP-Rule" id="MF_01011"/>
    </source>
</evidence>
<sequence length="365" mass="42176">MNVDAMDPQQYDAQLDVKRQKLAQLFVDFETPELEVFASQKAHYRMRAEFRVWHEGEDLYYYMFDKAQNQKIRCEQFLPASQLINDMMPELMAALRPNPVLRHKLFQVDFLSTLSGEILVSLLYHKQLDAQWQEEAQALKEALSSKFKVDIIGRARKQKLVMDRDFVIESLPVNGKQLTYKQVENSFTQPNGEVAIKMLEWAIDITRDSSGDLLELYCGNGNFSIALAQNFNRVLATELAKPSVDSAQYNIEANQIDNLQIIRMSAEDFTDALAKKRSFRRLEGVDLDSYDCNTIFVDPPRAGLDDNTLSMVQGYERILYISCNPNTLLDNLKVLDKTHKITRFALFDQFPYTDHMESGVLLERR</sequence>
<dbReference type="EC" id="2.1.1.-" evidence="1"/>
<dbReference type="EC" id="2.1.1.35" evidence="1"/>
<dbReference type="EMBL" id="CP000606">
    <property type="protein sequence ID" value="ABO22010.1"/>
    <property type="molecule type" value="Genomic_DNA"/>
</dbReference>
<dbReference type="RefSeq" id="WP_011863947.1">
    <property type="nucleotide sequence ID" value="NC_009092.1"/>
</dbReference>
<dbReference type="SMR" id="A3Q962"/>
<dbReference type="STRING" id="323850.Shew_0138"/>
<dbReference type="KEGG" id="slo:Shew_0138"/>
<dbReference type="eggNOG" id="COG2265">
    <property type="taxonomic scope" value="Bacteria"/>
</dbReference>
<dbReference type="HOGENOM" id="CLU_043022_0_0_6"/>
<dbReference type="OrthoDB" id="9804590at2"/>
<dbReference type="Proteomes" id="UP000001558">
    <property type="component" value="Chromosome"/>
</dbReference>
<dbReference type="GO" id="GO:0005829">
    <property type="term" value="C:cytosol"/>
    <property type="evidence" value="ECO:0007669"/>
    <property type="project" value="TreeGrafter"/>
</dbReference>
<dbReference type="GO" id="GO:0019843">
    <property type="term" value="F:rRNA binding"/>
    <property type="evidence" value="ECO:0007669"/>
    <property type="project" value="TreeGrafter"/>
</dbReference>
<dbReference type="GO" id="GO:0030697">
    <property type="term" value="F:tRNA (uracil(54)-C5)-methyltransferase activity, S-adenosyl methionine-dependent"/>
    <property type="evidence" value="ECO:0007669"/>
    <property type="project" value="UniProtKB-UniRule"/>
</dbReference>
<dbReference type="GO" id="GO:0000049">
    <property type="term" value="F:tRNA binding"/>
    <property type="evidence" value="ECO:0007669"/>
    <property type="project" value="TreeGrafter"/>
</dbReference>
<dbReference type="GO" id="GO:0030488">
    <property type="term" value="P:tRNA methylation"/>
    <property type="evidence" value="ECO:0007669"/>
    <property type="project" value="UniProtKB-UniRule"/>
</dbReference>
<dbReference type="CDD" id="cd02440">
    <property type="entry name" value="AdoMet_MTases"/>
    <property type="match status" value="1"/>
</dbReference>
<dbReference type="FunFam" id="2.40.50.1070:FF:000001">
    <property type="entry name" value="tRNA/tmRNA (uracil-C(5))-methyltransferase"/>
    <property type="match status" value="1"/>
</dbReference>
<dbReference type="FunFam" id="3.40.50.150:FF:000012">
    <property type="entry name" value="tRNA/tmRNA (uracil-C(5))-methyltransferase"/>
    <property type="match status" value="1"/>
</dbReference>
<dbReference type="Gene3D" id="2.40.50.1070">
    <property type="match status" value="1"/>
</dbReference>
<dbReference type="Gene3D" id="3.40.50.150">
    <property type="entry name" value="Vaccinia Virus protein VP39"/>
    <property type="match status" value="1"/>
</dbReference>
<dbReference type="HAMAP" id="MF_01011">
    <property type="entry name" value="RNA_methyltr_TrmA"/>
    <property type="match status" value="1"/>
</dbReference>
<dbReference type="InterPro" id="IPR030390">
    <property type="entry name" value="MeTrfase_TrmA_AS"/>
</dbReference>
<dbReference type="InterPro" id="IPR030391">
    <property type="entry name" value="MeTrfase_TrmA_CS"/>
</dbReference>
<dbReference type="InterPro" id="IPR029063">
    <property type="entry name" value="SAM-dependent_MTases_sf"/>
</dbReference>
<dbReference type="InterPro" id="IPR011869">
    <property type="entry name" value="TrmA_MeTrfase"/>
</dbReference>
<dbReference type="InterPro" id="IPR010280">
    <property type="entry name" value="U5_MeTrfase_fam"/>
</dbReference>
<dbReference type="NCBIfam" id="TIGR02143">
    <property type="entry name" value="trmA_only"/>
    <property type="match status" value="1"/>
</dbReference>
<dbReference type="PANTHER" id="PTHR47790">
    <property type="entry name" value="TRNA/TMRNA (URACIL-C(5))-METHYLTRANSFERASE"/>
    <property type="match status" value="1"/>
</dbReference>
<dbReference type="PANTHER" id="PTHR47790:SF2">
    <property type="entry name" value="TRNA_TMRNA (URACIL-C(5))-METHYLTRANSFERASE"/>
    <property type="match status" value="1"/>
</dbReference>
<dbReference type="Pfam" id="PF05958">
    <property type="entry name" value="tRNA_U5-meth_tr"/>
    <property type="match status" value="1"/>
</dbReference>
<dbReference type="SUPFAM" id="SSF53335">
    <property type="entry name" value="S-adenosyl-L-methionine-dependent methyltransferases"/>
    <property type="match status" value="1"/>
</dbReference>
<dbReference type="PROSITE" id="PS51687">
    <property type="entry name" value="SAM_MT_RNA_M5U"/>
    <property type="match status" value="1"/>
</dbReference>
<dbReference type="PROSITE" id="PS01230">
    <property type="entry name" value="TRMA_1"/>
    <property type="match status" value="1"/>
</dbReference>
<dbReference type="PROSITE" id="PS01231">
    <property type="entry name" value="TRMA_2"/>
    <property type="match status" value="1"/>
</dbReference>
<proteinExistence type="inferred from homology"/>
<accession>A3Q962</accession>
<reference key="1">
    <citation type="submission" date="2007-03" db="EMBL/GenBank/DDBJ databases">
        <title>Complete sequence of Shewanella loihica PV-4.</title>
        <authorList>
            <consortium name="US DOE Joint Genome Institute"/>
            <person name="Copeland A."/>
            <person name="Lucas S."/>
            <person name="Lapidus A."/>
            <person name="Barry K."/>
            <person name="Detter J.C."/>
            <person name="Glavina del Rio T."/>
            <person name="Hammon N."/>
            <person name="Israni S."/>
            <person name="Dalin E."/>
            <person name="Tice H."/>
            <person name="Pitluck S."/>
            <person name="Chain P."/>
            <person name="Malfatti S."/>
            <person name="Shin M."/>
            <person name="Vergez L."/>
            <person name="Schmutz J."/>
            <person name="Larimer F."/>
            <person name="Land M."/>
            <person name="Hauser L."/>
            <person name="Kyrpides N."/>
            <person name="Mikhailova N."/>
            <person name="Romine M.F."/>
            <person name="Serres G."/>
            <person name="Fredrickson J."/>
            <person name="Tiedje J."/>
            <person name="Richardson P."/>
        </authorList>
    </citation>
    <scope>NUCLEOTIDE SEQUENCE [LARGE SCALE GENOMIC DNA]</scope>
    <source>
        <strain>ATCC BAA-1088 / PV-4</strain>
    </source>
</reference>
<comment type="function">
    <text evidence="1">Dual-specificity methyltransferase that catalyzes the formation of 5-methyluridine at position 54 (m5U54) in all tRNAs, and that of position 341 (m5U341) in tmRNA (transfer-mRNA).</text>
</comment>
<comment type="catalytic activity">
    <reaction evidence="1">
        <text>uridine(54) in tRNA + S-adenosyl-L-methionine = 5-methyluridine(54) in tRNA + S-adenosyl-L-homocysteine + H(+)</text>
        <dbReference type="Rhea" id="RHEA:42712"/>
        <dbReference type="Rhea" id="RHEA-COMP:10167"/>
        <dbReference type="Rhea" id="RHEA-COMP:10193"/>
        <dbReference type="ChEBI" id="CHEBI:15378"/>
        <dbReference type="ChEBI" id="CHEBI:57856"/>
        <dbReference type="ChEBI" id="CHEBI:59789"/>
        <dbReference type="ChEBI" id="CHEBI:65315"/>
        <dbReference type="ChEBI" id="CHEBI:74447"/>
        <dbReference type="EC" id="2.1.1.35"/>
    </reaction>
</comment>
<comment type="catalytic activity">
    <reaction evidence="1">
        <text>uridine(341) in tmRNA + S-adenosyl-L-methionine = 5-methyluridine(341) in tmRNA + S-adenosyl-L-homocysteine + H(+)</text>
        <dbReference type="Rhea" id="RHEA:43612"/>
        <dbReference type="Rhea" id="RHEA-COMP:10630"/>
        <dbReference type="Rhea" id="RHEA-COMP:10631"/>
        <dbReference type="ChEBI" id="CHEBI:15378"/>
        <dbReference type="ChEBI" id="CHEBI:57856"/>
        <dbReference type="ChEBI" id="CHEBI:59789"/>
        <dbReference type="ChEBI" id="CHEBI:65315"/>
        <dbReference type="ChEBI" id="CHEBI:74447"/>
    </reaction>
</comment>
<comment type="similarity">
    <text evidence="1">Belongs to the class I-like SAM-binding methyltransferase superfamily. RNA M5U methyltransferase family. TrmA subfamily.</text>
</comment>
<gene>
    <name evidence="1" type="primary">trmA</name>
    <name type="ordered locus">Shew_0138</name>
</gene>
<name>TRMA_SHELP</name>
<organism>
    <name type="scientific">Shewanella loihica (strain ATCC BAA-1088 / PV-4)</name>
    <dbReference type="NCBI Taxonomy" id="323850"/>
    <lineage>
        <taxon>Bacteria</taxon>
        <taxon>Pseudomonadati</taxon>
        <taxon>Pseudomonadota</taxon>
        <taxon>Gammaproteobacteria</taxon>
        <taxon>Alteromonadales</taxon>
        <taxon>Shewanellaceae</taxon>
        <taxon>Shewanella</taxon>
    </lineage>
</organism>
<protein>
    <recommendedName>
        <fullName evidence="1">tRNA/tmRNA (uracil-C(5))-methyltransferase</fullName>
        <ecNumber evidence="1">2.1.1.-</ecNumber>
        <ecNumber evidence="1">2.1.1.35</ecNumber>
    </recommendedName>
    <alternativeName>
        <fullName evidence="1">tRNA (uracil(54)-C(5))-methyltransferase</fullName>
    </alternativeName>
    <alternativeName>
        <fullName evidence="1">tRNA(m5U54)-methyltransferase</fullName>
        <shortName evidence="1">RUMT</shortName>
    </alternativeName>
    <alternativeName>
        <fullName evidence="1">tmRNA (uracil(341)-C(5))-methyltransferase</fullName>
    </alternativeName>
</protein>
<keyword id="KW-0489">Methyltransferase</keyword>
<keyword id="KW-1185">Reference proteome</keyword>
<keyword id="KW-0949">S-adenosyl-L-methionine</keyword>
<keyword id="KW-0808">Transferase</keyword>
<keyword id="KW-0819">tRNA processing</keyword>